<accession>O04244</accession>
<feature type="chain" id="PRO_0000271284" description="Uncharacterized protein At4g02000">
    <location>
        <begin position="1"/>
        <end position="314"/>
    </location>
</feature>
<feature type="region of interest" description="Disordered" evidence="1">
    <location>
        <begin position="170"/>
        <end position="203"/>
    </location>
</feature>
<feature type="region of interest" description="Disordered" evidence="1">
    <location>
        <begin position="258"/>
        <end position="314"/>
    </location>
</feature>
<feature type="compositionally biased region" description="Low complexity" evidence="1">
    <location>
        <begin position="171"/>
        <end position="186"/>
    </location>
</feature>
<feature type="compositionally biased region" description="Pro residues" evidence="1">
    <location>
        <begin position="187"/>
        <end position="200"/>
    </location>
</feature>
<feature type="compositionally biased region" description="Polar residues" evidence="1">
    <location>
        <begin position="261"/>
        <end position="272"/>
    </location>
</feature>
<feature type="compositionally biased region" description="Basic and acidic residues" evidence="1">
    <location>
        <begin position="289"/>
        <end position="303"/>
    </location>
</feature>
<gene>
    <name type="ordered locus">At4g02000</name>
    <name type="ORF">T10M13.1</name>
    <name type="ORF">T7B11.29</name>
</gene>
<protein>
    <recommendedName>
        <fullName>Uncharacterized protein At4g02000</fullName>
    </recommendedName>
</protein>
<organism>
    <name type="scientific">Arabidopsis thaliana</name>
    <name type="common">Mouse-ear cress</name>
    <dbReference type="NCBI Taxonomy" id="3702"/>
    <lineage>
        <taxon>Eukaryota</taxon>
        <taxon>Viridiplantae</taxon>
        <taxon>Streptophyta</taxon>
        <taxon>Embryophyta</taxon>
        <taxon>Tracheophyta</taxon>
        <taxon>Spermatophyta</taxon>
        <taxon>Magnoliopsida</taxon>
        <taxon>eudicotyledons</taxon>
        <taxon>Gunneridae</taxon>
        <taxon>Pentapetalae</taxon>
        <taxon>rosids</taxon>
        <taxon>malvids</taxon>
        <taxon>Brassicales</taxon>
        <taxon>Brassicaceae</taxon>
        <taxon>Camelineae</taxon>
        <taxon>Arabidopsis</taxon>
    </lineage>
</organism>
<evidence type="ECO:0000256" key="1">
    <source>
        <dbReference type="SAM" id="MobiDB-lite"/>
    </source>
</evidence>
<keyword id="KW-1185">Reference proteome</keyword>
<dbReference type="EMBL" id="AC007138">
    <property type="protein sequence ID" value="AAD22662.1"/>
    <property type="molecule type" value="Genomic_DNA"/>
</dbReference>
<dbReference type="EMBL" id="AF001308">
    <property type="protein sequence ID" value="AAC78692.1"/>
    <property type="molecule type" value="Genomic_DNA"/>
</dbReference>
<dbReference type="EMBL" id="AL161493">
    <property type="protein sequence ID" value="CAB80693.1"/>
    <property type="molecule type" value="Genomic_DNA"/>
</dbReference>
<dbReference type="EMBL" id="CP002687">
    <property type="protein sequence ID" value="AEE82110.1"/>
    <property type="molecule type" value="Genomic_DNA"/>
</dbReference>
<dbReference type="PIR" id="T01501">
    <property type="entry name" value="T01501"/>
</dbReference>
<dbReference type="RefSeq" id="NP_192109.1">
    <property type="nucleotide sequence ID" value="NM_116431.3"/>
</dbReference>
<dbReference type="FunCoup" id="O04244">
    <property type="interactions" value="3"/>
</dbReference>
<dbReference type="PaxDb" id="3702-AT4G02000.1"/>
<dbReference type="EnsemblPlants" id="AT4G02000.1">
    <property type="protein sequence ID" value="AT4G02000.1"/>
    <property type="gene ID" value="AT4G02000"/>
</dbReference>
<dbReference type="GeneID" id="827224"/>
<dbReference type="Gramene" id="AT4G02000.1">
    <property type="protein sequence ID" value="AT4G02000.1"/>
    <property type="gene ID" value="AT4G02000"/>
</dbReference>
<dbReference type="KEGG" id="ath:AT4G02000"/>
<dbReference type="Araport" id="AT4G02000"/>
<dbReference type="TAIR" id="AT4G02000"/>
<dbReference type="HOGENOM" id="CLU_070919_0_0_1"/>
<dbReference type="InParanoid" id="O04244"/>
<dbReference type="OMA" id="FLGHEAK"/>
<dbReference type="PhylomeDB" id="O04244"/>
<dbReference type="PRO" id="PR:O04244"/>
<dbReference type="Proteomes" id="UP000006548">
    <property type="component" value="Chromosome 4"/>
</dbReference>
<dbReference type="ExpressionAtlas" id="O04244">
    <property type="expression patterns" value="baseline and differential"/>
</dbReference>
<dbReference type="InterPro" id="IPR040256">
    <property type="entry name" value="At4g02000-like"/>
</dbReference>
<dbReference type="InterPro" id="IPR025558">
    <property type="entry name" value="DUF4283"/>
</dbReference>
<dbReference type="InterPro" id="IPR025836">
    <property type="entry name" value="Zn_knuckle_CX2CX4HX4C"/>
</dbReference>
<dbReference type="PANTHER" id="PTHR31286:SF162">
    <property type="entry name" value="DUF4283 DOMAIN-CONTAINING PROTEIN-RELATED"/>
    <property type="match status" value="1"/>
</dbReference>
<dbReference type="PANTHER" id="PTHR31286">
    <property type="entry name" value="GLYCINE-RICH CELL WALL STRUCTURAL PROTEIN 1.8-LIKE"/>
    <property type="match status" value="1"/>
</dbReference>
<dbReference type="Pfam" id="PF14111">
    <property type="entry name" value="DUF4283"/>
    <property type="match status" value="1"/>
</dbReference>
<dbReference type="Pfam" id="PF14392">
    <property type="entry name" value="zf-CCHC_4"/>
    <property type="match status" value="1"/>
</dbReference>
<name>Y4200_ARATH</name>
<proteinExistence type="evidence at transcript level"/>
<sequence length="314" mass="36365">MTSLTIDLLSVLRREPWLYNNWFVTTHRWEVNLTFHLLTSIELWVQMRGIPLLYVCEETALEIAHELGKILTLDFHDSTTTQIAYIRVRIRFGITDRLRFFQRIIFDFGEAALISFQYERLRRICSSCFRMTHHRNSCPYRQIEPLHRVTNSTAQRNVREEVFMRDENLRSSMNSQSQMSESSFPTPIDPPPRIPHPPLNPDELVAAYYPHTRATSLPNFAGPLPQVPLRKNVDERDSNIQPFSGPAFAAHSPRLVEVGESSRQGENTQNVHTVEKGDSSKRKNMGGPRFKDDARKSNEDEHMNGGILKPPKKR</sequence>
<reference key="1">
    <citation type="journal article" date="1999" name="Nature">
        <title>Sequence and analysis of chromosome 4 of the plant Arabidopsis thaliana.</title>
        <authorList>
            <person name="Mayer K.F.X."/>
            <person name="Schueller C."/>
            <person name="Wambutt R."/>
            <person name="Murphy G."/>
            <person name="Volckaert G."/>
            <person name="Pohl T."/>
            <person name="Duesterhoeft A."/>
            <person name="Stiekema W."/>
            <person name="Entian K.-D."/>
            <person name="Terryn N."/>
            <person name="Harris B."/>
            <person name="Ansorge W."/>
            <person name="Brandt P."/>
            <person name="Grivell L.A."/>
            <person name="Rieger M."/>
            <person name="Weichselgartner M."/>
            <person name="de Simone V."/>
            <person name="Obermaier B."/>
            <person name="Mache R."/>
            <person name="Mueller M."/>
            <person name="Kreis M."/>
            <person name="Delseny M."/>
            <person name="Puigdomenech P."/>
            <person name="Watson M."/>
            <person name="Schmidtheini T."/>
            <person name="Reichert B."/>
            <person name="Portetelle D."/>
            <person name="Perez-Alonso M."/>
            <person name="Boutry M."/>
            <person name="Bancroft I."/>
            <person name="Vos P."/>
            <person name="Hoheisel J."/>
            <person name="Zimmermann W."/>
            <person name="Wedler H."/>
            <person name="Ridley P."/>
            <person name="Langham S.-A."/>
            <person name="McCullagh B."/>
            <person name="Bilham L."/>
            <person name="Robben J."/>
            <person name="van der Schueren J."/>
            <person name="Grymonprez B."/>
            <person name="Chuang Y.-J."/>
            <person name="Vandenbussche F."/>
            <person name="Braeken M."/>
            <person name="Weltjens I."/>
            <person name="Voet M."/>
            <person name="Bastiaens I."/>
            <person name="Aert R."/>
            <person name="Defoor E."/>
            <person name="Weitzenegger T."/>
            <person name="Bothe G."/>
            <person name="Ramsperger U."/>
            <person name="Hilbert H."/>
            <person name="Braun M."/>
            <person name="Holzer E."/>
            <person name="Brandt A."/>
            <person name="Peters S."/>
            <person name="van Staveren M."/>
            <person name="Dirkse W."/>
            <person name="Mooijman P."/>
            <person name="Klein Lankhorst R."/>
            <person name="Rose M."/>
            <person name="Hauf J."/>
            <person name="Koetter P."/>
            <person name="Berneiser S."/>
            <person name="Hempel S."/>
            <person name="Feldpausch M."/>
            <person name="Lamberth S."/>
            <person name="Van den Daele H."/>
            <person name="De Keyser A."/>
            <person name="Buysshaert C."/>
            <person name="Gielen J."/>
            <person name="Villarroel R."/>
            <person name="De Clercq R."/>
            <person name="van Montagu M."/>
            <person name="Rogers J."/>
            <person name="Cronin A."/>
            <person name="Quail M.A."/>
            <person name="Bray-Allen S."/>
            <person name="Clark L."/>
            <person name="Doggett J."/>
            <person name="Hall S."/>
            <person name="Kay M."/>
            <person name="Lennard N."/>
            <person name="McLay K."/>
            <person name="Mayes R."/>
            <person name="Pettett A."/>
            <person name="Rajandream M.A."/>
            <person name="Lyne M."/>
            <person name="Benes V."/>
            <person name="Rechmann S."/>
            <person name="Borkova D."/>
            <person name="Bloecker H."/>
            <person name="Scharfe M."/>
            <person name="Grimm M."/>
            <person name="Loehnert T.-H."/>
            <person name="Dose S."/>
            <person name="de Haan M."/>
            <person name="Maarse A.C."/>
            <person name="Schaefer M."/>
            <person name="Mueller-Auer S."/>
            <person name="Gabel C."/>
            <person name="Fuchs M."/>
            <person name="Fartmann B."/>
            <person name="Granderath K."/>
            <person name="Dauner D."/>
            <person name="Herzl A."/>
            <person name="Neumann S."/>
            <person name="Argiriou A."/>
            <person name="Vitale D."/>
            <person name="Liguori R."/>
            <person name="Piravandi E."/>
            <person name="Massenet O."/>
            <person name="Quigley F."/>
            <person name="Clabauld G."/>
            <person name="Muendlein A."/>
            <person name="Felber R."/>
            <person name="Schnabl S."/>
            <person name="Hiller R."/>
            <person name="Schmidt W."/>
            <person name="Lecharny A."/>
            <person name="Aubourg S."/>
            <person name="Chefdor F."/>
            <person name="Cooke R."/>
            <person name="Berger C."/>
            <person name="Monfort A."/>
            <person name="Casacuberta E."/>
            <person name="Gibbons T."/>
            <person name="Weber N."/>
            <person name="Vandenbol M."/>
            <person name="Bargues M."/>
            <person name="Terol J."/>
            <person name="Torres A."/>
            <person name="Perez-Perez A."/>
            <person name="Purnelle B."/>
            <person name="Bent E."/>
            <person name="Johnson S."/>
            <person name="Tacon D."/>
            <person name="Jesse T."/>
            <person name="Heijnen L."/>
            <person name="Schwarz S."/>
            <person name="Scholler P."/>
            <person name="Heber S."/>
            <person name="Francs P."/>
            <person name="Bielke C."/>
            <person name="Frishman D."/>
            <person name="Haase D."/>
            <person name="Lemcke K."/>
            <person name="Mewes H.-W."/>
            <person name="Stocker S."/>
            <person name="Zaccaria P."/>
            <person name="Bevan M."/>
            <person name="Wilson R.K."/>
            <person name="de la Bastide M."/>
            <person name="Habermann K."/>
            <person name="Parnell L."/>
            <person name="Dedhia N."/>
            <person name="Gnoj L."/>
            <person name="Schutz K."/>
            <person name="Huang E."/>
            <person name="Spiegel L."/>
            <person name="Sekhon M."/>
            <person name="Murray J."/>
            <person name="Sheet P."/>
            <person name="Cordes M."/>
            <person name="Abu-Threideh J."/>
            <person name="Stoneking T."/>
            <person name="Kalicki J."/>
            <person name="Graves T."/>
            <person name="Harmon G."/>
            <person name="Edwards J."/>
            <person name="Latreille P."/>
            <person name="Courtney L."/>
            <person name="Cloud J."/>
            <person name="Abbott A."/>
            <person name="Scott K."/>
            <person name="Johnson D."/>
            <person name="Minx P."/>
            <person name="Bentley D."/>
            <person name="Fulton B."/>
            <person name="Miller N."/>
            <person name="Greco T."/>
            <person name="Kemp K."/>
            <person name="Kramer J."/>
            <person name="Fulton L."/>
            <person name="Mardis E."/>
            <person name="Dante M."/>
            <person name="Pepin K."/>
            <person name="Hillier L.W."/>
            <person name="Nelson J."/>
            <person name="Spieth J."/>
            <person name="Ryan E."/>
            <person name="Andrews S."/>
            <person name="Geisel C."/>
            <person name="Layman D."/>
            <person name="Du H."/>
            <person name="Ali J."/>
            <person name="Berghoff A."/>
            <person name="Jones K."/>
            <person name="Drone K."/>
            <person name="Cotton M."/>
            <person name="Joshu C."/>
            <person name="Antonoiu B."/>
            <person name="Zidanic M."/>
            <person name="Strong C."/>
            <person name="Sun H."/>
            <person name="Lamar B."/>
            <person name="Yordan C."/>
            <person name="Ma P."/>
            <person name="Zhong J."/>
            <person name="Preston R."/>
            <person name="Vil D."/>
            <person name="Shekher M."/>
            <person name="Matero A."/>
            <person name="Shah R."/>
            <person name="Swaby I.K."/>
            <person name="O'Shaughnessy A."/>
            <person name="Rodriguez M."/>
            <person name="Hoffman J."/>
            <person name="Till S."/>
            <person name="Granat S."/>
            <person name="Shohdy N."/>
            <person name="Hasegawa A."/>
            <person name="Hameed A."/>
            <person name="Lodhi M."/>
            <person name="Johnson A."/>
            <person name="Chen E."/>
            <person name="Marra M.A."/>
            <person name="Martienssen R."/>
            <person name="McCombie W.R."/>
        </authorList>
    </citation>
    <scope>NUCLEOTIDE SEQUENCE [LARGE SCALE GENOMIC DNA]</scope>
    <source>
        <strain>cv. Columbia</strain>
    </source>
</reference>
<reference key="2">
    <citation type="journal article" date="2017" name="Plant J.">
        <title>Araport11: a complete reannotation of the Arabidopsis thaliana reference genome.</title>
        <authorList>
            <person name="Cheng C.Y."/>
            <person name="Krishnakumar V."/>
            <person name="Chan A.P."/>
            <person name="Thibaud-Nissen F."/>
            <person name="Schobel S."/>
            <person name="Town C.D."/>
        </authorList>
    </citation>
    <scope>GENOME REANNOTATION</scope>
    <source>
        <strain>cv. Columbia</strain>
    </source>
</reference>